<gene>
    <name evidence="1" type="primary">mraY</name>
    <name type="ordered locus">bbp_201</name>
</gene>
<dbReference type="EC" id="2.7.8.13" evidence="1"/>
<dbReference type="EMBL" id="AE016826">
    <property type="protein sequence ID" value="AAO26933.1"/>
    <property type="molecule type" value="Genomic_DNA"/>
</dbReference>
<dbReference type="RefSeq" id="WP_011091334.1">
    <property type="nucleotide sequence ID" value="NC_004545.1"/>
</dbReference>
<dbReference type="SMR" id="P59436"/>
<dbReference type="STRING" id="224915.bbp_201"/>
<dbReference type="KEGG" id="bab:bbp_201"/>
<dbReference type="eggNOG" id="COG0472">
    <property type="taxonomic scope" value="Bacteria"/>
</dbReference>
<dbReference type="HOGENOM" id="CLU_023982_0_0_6"/>
<dbReference type="OrthoDB" id="9805475at2"/>
<dbReference type="UniPathway" id="UPA00219"/>
<dbReference type="Proteomes" id="UP000000601">
    <property type="component" value="Chromosome"/>
</dbReference>
<dbReference type="GO" id="GO:0005886">
    <property type="term" value="C:plasma membrane"/>
    <property type="evidence" value="ECO:0007669"/>
    <property type="project" value="UniProtKB-SubCell"/>
</dbReference>
<dbReference type="GO" id="GO:0046872">
    <property type="term" value="F:metal ion binding"/>
    <property type="evidence" value="ECO:0007669"/>
    <property type="project" value="UniProtKB-KW"/>
</dbReference>
<dbReference type="GO" id="GO:0008963">
    <property type="term" value="F:phospho-N-acetylmuramoyl-pentapeptide-transferase activity"/>
    <property type="evidence" value="ECO:0007669"/>
    <property type="project" value="UniProtKB-UniRule"/>
</dbReference>
<dbReference type="GO" id="GO:0051992">
    <property type="term" value="F:UDP-N-acetylmuramoyl-L-alanyl-D-glutamyl-meso-2,6-diaminopimelyl-D-alanyl-D-alanine:undecaprenyl-phosphate transferase activity"/>
    <property type="evidence" value="ECO:0007669"/>
    <property type="project" value="RHEA"/>
</dbReference>
<dbReference type="GO" id="GO:0051301">
    <property type="term" value="P:cell division"/>
    <property type="evidence" value="ECO:0007669"/>
    <property type="project" value="UniProtKB-KW"/>
</dbReference>
<dbReference type="GO" id="GO:0071555">
    <property type="term" value="P:cell wall organization"/>
    <property type="evidence" value="ECO:0007669"/>
    <property type="project" value="UniProtKB-KW"/>
</dbReference>
<dbReference type="GO" id="GO:0009252">
    <property type="term" value="P:peptidoglycan biosynthetic process"/>
    <property type="evidence" value="ECO:0007669"/>
    <property type="project" value="UniProtKB-UniRule"/>
</dbReference>
<dbReference type="GO" id="GO:0008360">
    <property type="term" value="P:regulation of cell shape"/>
    <property type="evidence" value="ECO:0007669"/>
    <property type="project" value="UniProtKB-KW"/>
</dbReference>
<dbReference type="CDD" id="cd06852">
    <property type="entry name" value="GT_MraY"/>
    <property type="match status" value="1"/>
</dbReference>
<dbReference type="HAMAP" id="MF_00038">
    <property type="entry name" value="MraY"/>
    <property type="match status" value="1"/>
</dbReference>
<dbReference type="InterPro" id="IPR000715">
    <property type="entry name" value="Glycosyl_transferase_4"/>
</dbReference>
<dbReference type="InterPro" id="IPR003524">
    <property type="entry name" value="PNAcMuramoyl-5peptid_Trfase"/>
</dbReference>
<dbReference type="InterPro" id="IPR018480">
    <property type="entry name" value="PNAcMuramoyl-5peptid_Trfase_CS"/>
</dbReference>
<dbReference type="NCBIfam" id="TIGR00445">
    <property type="entry name" value="mraY"/>
    <property type="match status" value="1"/>
</dbReference>
<dbReference type="PANTHER" id="PTHR22926">
    <property type="entry name" value="PHOSPHO-N-ACETYLMURAMOYL-PENTAPEPTIDE-TRANSFERASE"/>
    <property type="match status" value="1"/>
</dbReference>
<dbReference type="PANTHER" id="PTHR22926:SF5">
    <property type="entry name" value="PHOSPHO-N-ACETYLMURAMOYL-PENTAPEPTIDE-TRANSFERASE HOMOLOG"/>
    <property type="match status" value="1"/>
</dbReference>
<dbReference type="Pfam" id="PF00953">
    <property type="entry name" value="Glycos_transf_4"/>
    <property type="match status" value="1"/>
</dbReference>
<dbReference type="Pfam" id="PF10555">
    <property type="entry name" value="MraY_sig1"/>
    <property type="match status" value="1"/>
</dbReference>
<dbReference type="PROSITE" id="PS01347">
    <property type="entry name" value="MRAY_1"/>
    <property type="match status" value="1"/>
</dbReference>
<dbReference type="PROSITE" id="PS01348">
    <property type="entry name" value="MRAY_2"/>
    <property type="match status" value="1"/>
</dbReference>
<organism>
    <name type="scientific">Buchnera aphidicola subsp. Baizongia pistaciae (strain Bp)</name>
    <dbReference type="NCBI Taxonomy" id="224915"/>
    <lineage>
        <taxon>Bacteria</taxon>
        <taxon>Pseudomonadati</taxon>
        <taxon>Pseudomonadota</taxon>
        <taxon>Gammaproteobacteria</taxon>
        <taxon>Enterobacterales</taxon>
        <taxon>Erwiniaceae</taxon>
        <taxon>Buchnera</taxon>
    </lineage>
</organism>
<protein>
    <recommendedName>
        <fullName evidence="1">Phospho-N-acetylmuramoyl-pentapeptide-transferase</fullName>
        <ecNumber evidence="1">2.7.8.13</ecNumber>
    </recommendedName>
    <alternativeName>
        <fullName evidence="1">UDP-MurNAc-pentapeptide phosphotransferase</fullName>
    </alternativeName>
</protein>
<name>MRAY_BUCBP</name>
<feature type="chain" id="PRO_0000108798" description="Phospho-N-acetylmuramoyl-pentapeptide-transferase">
    <location>
        <begin position="1"/>
        <end position="340"/>
    </location>
</feature>
<feature type="transmembrane region" description="Helical" evidence="1">
    <location>
        <begin position="5"/>
        <end position="25"/>
    </location>
</feature>
<feature type="transmembrane region" description="Helical" evidence="1">
    <location>
        <begin position="50"/>
        <end position="70"/>
    </location>
</feature>
<feature type="transmembrane region" description="Helical" evidence="1">
    <location>
        <begin position="73"/>
        <end position="93"/>
    </location>
</feature>
<feature type="transmembrane region" description="Helical" evidence="1">
    <location>
        <begin position="113"/>
        <end position="133"/>
    </location>
</feature>
<feature type="transmembrane region" description="Helical" evidence="1">
    <location>
        <begin position="147"/>
        <end position="167"/>
    </location>
</feature>
<feature type="transmembrane region" description="Helical" evidence="1">
    <location>
        <begin position="178"/>
        <end position="198"/>
    </location>
</feature>
<feature type="transmembrane region" description="Helical" evidence="1">
    <location>
        <begin position="218"/>
        <end position="238"/>
    </location>
</feature>
<feature type="transmembrane region" description="Helical" evidence="1">
    <location>
        <begin position="242"/>
        <end position="262"/>
    </location>
</feature>
<feature type="transmembrane region" description="Helical" evidence="1">
    <location>
        <begin position="267"/>
        <end position="287"/>
    </location>
</feature>
<feature type="transmembrane region" description="Helical" evidence="1">
    <location>
        <begin position="318"/>
        <end position="338"/>
    </location>
</feature>
<sequence length="340" mass="38570">MIIRFILSFFTSLLLMLIFGPHLINWLNKYKIQQIIRNFGPKSHFNKKNTPTMGGILIIFSIIISTIIWTKLSNPYVWLTLTILIGYGIIGFIDDNMKIYYKNSKGLSSLHKFSLLSILACIIIFLIYYIINDHSTIKLIVPFSKNIIFNTKMICILISYFAIIGTSNAVNLTDGLDGLAIVPIIFVTTNLSIISFISGNVNLSYYFNTIYIPYSNELTIICAAIIGSSLGFLWFNTYPAQIFMGDVGSLSLGGTIGIISVLLRQEILLIIVGGLFVIETLSVIIQVLYYKITKKKLFKMTPIHHHYELNGCPETRLIIRFWIISFILMLLGLLMLKVHQ</sequence>
<evidence type="ECO:0000255" key="1">
    <source>
        <dbReference type="HAMAP-Rule" id="MF_00038"/>
    </source>
</evidence>
<keyword id="KW-0131">Cell cycle</keyword>
<keyword id="KW-0132">Cell division</keyword>
<keyword id="KW-1003">Cell membrane</keyword>
<keyword id="KW-0133">Cell shape</keyword>
<keyword id="KW-0961">Cell wall biogenesis/degradation</keyword>
<keyword id="KW-0460">Magnesium</keyword>
<keyword id="KW-0472">Membrane</keyword>
<keyword id="KW-0479">Metal-binding</keyword>
<keyword id="KW-0573">Peptidoglycan synthesis</keyword>
<keyword id="KW-1185">Reference proteome</keyword>
<keyword id="KW-0808">Transferase</keyword>
<keyword id="KW-0812">Transmembrane</keyword>
<keyword id="KW-1133">Transmembrane helix</keyword>
<proteinExistence type="inferred from homology"/>
<comment type="function">
    <text evidence="1">Catalyzes the initial step of the lipid cycle reactions in the biosynthesis of the cell wall peptidoglycan: transfers peptidoglycan precursor phospho-MurNAc-pentapeptide from UDP-MurNAc-pentapeptide onto the lipid carrier undecaprenyl phosphate, yielding undecaprenyl-pyrophosphoryl-MurNAc-pentapeptide, known as lipid I.</text>
</comment>
<comment type="catalytic activity">
    <reaction evidence="1">
        <text>UDP-N-acetyl-alpha-D-muramoyl-L-alanyl-gamma-D-glutamyl-meso-2,6-diaminopimeloyl-D-alanyl-D-alanine + di-trans,octa-cis-undecaprenyl phosphate = di-trans,octa-cis-undecaprenyl diphospho-N-acetyl-alpha-D-muramoyl-L-alanyl-D-glutamyl-meso-2,6-diaminopimeloyl-D-alanyl-D-alanine + UMP</text>
        <dbReference type="Rhea" id="RHEA:28386"/>
        <dbReference type="ChEBI" id="CHEBI:57865"/>
        <dbReference type="ChEBI" id="CHEBI:60392"/>
        <dbReference type="ChEBI" id="CHEBI:61386"/>
        <dbReference type="ChEBI" id="CHEBI:61387"/>
        <dbReference type="EC" id="2.7.8.13"/>
    </reaction>
</comment>
<comment type="cofactor">
    <cofactor evidence="1">
        <name>Mg(2+)</name>
        <dbReference type="ChEBI" id="CHEBI:18420"/>
    </cofactor>
</comment>
<comment type="pathway">
    <text evidence="1">Cell wall biogenesis; peptidoglycan biosynthesis.</text>
</comment>
<comment type="subcellular location">
    <subcellularLocation>
        <location evidence="1">Cell membrane</location>
        <topology evidence="1">Multi-pass membrane protein</topology>
    </subcellularLocation>
</comment>
<comment type="similarity">
    <text evidence="1">Belongs to the glycosyltransferase 4 family. MraY subfamily.</text>
</comment>
<reference key="1">
    <citation type="journal article" date="2003" name="Proc. Natl. Acad. Sci. U.S.A.">
        <title>Reductive genome evolution in Buchnera aphidicola.</title>
        <authorList>
            <person name="van Ham R.C.H.J."/>
            <person name="Kamerbeek J."/>
            <person name="Palacios C."/>
            <person name="Rausell C."/>
            <person name="Abascal F."/>
            <person name="Bastolla U."/>
            <person name="Fernandez J.M."/>
            <person name="Jimenez L."/>
            <person name="Postigo M."/>
            <person name="Silva F.J."/>
            <person name="Tamames J."/>
            <person name="Viguera E."/>
            <person name="Latorre A."/>
            <person name="Valencia A."/>
            <person name="Moran F."/>
            <person name="Moya A."/>
        </authorList>
    </citation>
    <scope>NUCLEOTIDE SEQUENCE [LARGE SCALE GENOMIC DNA]</scope>
    <source>
        <strain>Bp</strain>
    </source>
</reference>
<accession>P59436</accession>